<comment type="function">
    <text evidence="2">Component of the larval cuticle.</text>
</comment>
<comment type="domain">
    <text evidence="2">The tetrapeptide (A-A-P-[AV]) repeats found throughout the protein are also present in many proteins constituting the protective envelope of other species.</text>
</comment>
<comment type="mass spectrometry">
    <text>Allele F1C.</text>
</comment>
<comment type="polymorphism">
    <text evidence="1">The following alleles of F1 are known: F1C, F1B and F1A. The sequence shown is that of F1C.</text>
</comment>
<sequence>GLIGAPIAAPIAAPLATSVVSTRTIHAAPVAVAHAAPLAVAHAAPVAVAHAAPLAVAHAAPVAVAHAAPLAVAHAAPAIAYGGYGSGLIGGAYGGGLIGSRSLYGGYGSGLGIARSTPGGYGSGLIGGAYGSGLIGGGLYGARYGLGAPALGHGLIGGAHLY</sequence>
<accession>Q9TXD9</accession>
<accession>Q9TXE0</accession>
<accession>Q9TXE1</accession>
<proteinExistence type="evidence at protein level"/>
<organism>
    <name type="scientific">Tenebrio molitor</name>
    <name type="common">Yellow mealworm beetle</name>
    <dbReference type="NCBI Taxonomy" id="7067"/>
    <lineage>
        <taxon>Eukaryota</taxon>
        <taxon>Metazoa</taxon>
        <taxon>Ecdysozoa</taxon>
        <taxon>Arthropoda</taxon>
        <taxon>Hexapoda</taxon>
        <taxon>Insecta</taxon>
        <taxon>Pterygota</taxon>
        <taxon>Neoptera</taxon>
        <taxon>Endopterygota</taxon>
        <taxon>Coleoptera</taxon>
        <taxon>Polyphaga</taxon>
        <taxon>Cucujiformia</taxon>
        <taxon>Tenebrionidae</taxon>
        <taxon>Tenebrio</taxon>
    </lineage>
</organism>
<feature type="chain" id="PRO_0000196135" description="Larval cuticle protein F1">
    <location>
        <begin position="1"/>
        <end position="162"/>
    </location>
</feature>
<feature type="repeat" description="1" evidence="2">
    <location>
        <begin position="27"/>
        <end position="30"/>
    </location>
</feature>
<feature type="repeat" description="2" evidence="2">
    <location>
        <begin position="43"/>
        <end position="46"/>
    </location>
</feature>
<feature type="repeat" description="3" evidence="2">
    <location>
        <begin position="59"/>
        <end position="62"/>
    </location>
</feature>
<feature type="repeat" description="4" evidence="2">
    <location>
        <begin position="75"/>
        <end position="78"/>
    </location>
</feature>
<feature type="sequence variant" description="In allele F1B." evidence="1">
    <location>
        <begin position="11"/>
        <end position="14"/>
    </location>
</feature>
<feature type="sequence variant" description="In allele F1A." evidence="1">
    <location>
        <begin position="40"/>
        <end position="47"/>
    </location>
</feature>
<dbReference type="GO" id="GO:0008010">
    <property type="term" value="F:structural constituent of chitin-based larval cuticle"/>
    <property type="evidence" value="ECO:0000303"/>
    <property type="project" value="UniProtKB"/>
</dbReference>
<reference evidence="2" key="1">
    <citation type="journal article" date="1995" name="Protein Sci.">
        <title>Isoforms of a cuticular protein from larvae of the meal beetle, Tenebrio molitor, studied by mass spectrometry in combination with Edman degradation and two-dimensional polyacrylamide gel electrophoresis.</title>
        <authorList>
            <person name="Haebel S."/>
            <person name="Jensen C."/>
            <person name="Andersen S.O."/>
            <person name="Roepstorff P."/>
        </authorList>
    </citation>
    <scope>PROTEIN SEQUENCE (F1A; F1B AND F1C)</scope>
    <scope>MASS SPECTROMETRY</scope>
    <source>
        <tissue evidence="1">Cuticle</tissue>
    </source>
</reference>
<protein>
    <recommendedName>
        <fullName>Larval cuticle protein F1</fullName>
    </recommendedName>
    <alternativeName>
        <fullName>Tml-F1</fullName>
    </alternativeName>
</protein>
<evidence type="ECO:0000269" key="1">
    <source>
    </source>
</evidence>
<evidence type="ECO:0000305" key="2"/>
<keyword id="KW-0193">Cuticle</keyword>
<keyword id="KW-0903">Direct protein sequencing</keyword>
<keyword id="KW-0677">Repeat</keyword>
<name>CUF1_TENMO</name>